<name>RL30_BACVZ</name>
<accession>A7Z0Q6</accession>
<sequence>MAKLEITLKRSVIGRPEDQRVTVRTLGLKKTNQTVVHEDNAAIRGMINKVSHLVSVKEQ</sequence>
<dbReference type="EMBL" id="CP000560">
    <property type="protein sequence ID" value="ABS72582.1"/>
    <property type="molecule type" value="Genomic_DNA"/>
</dbReference>
<dbReference type="RefSeq" id="WP_003156497.1">
    <property type="nucleotide sequence ID" value="NC_009725.2"/>
</dbReference>
<dbReference type="SMR" id="A7Z0Q6"/>
<dbReference type="GeneID" id="93079298"/>
<dbReference type="KEGG" id="bay:RBAM_001590"/>
<dbReference type="HOGENOM" id="CLU_131047_2_1_9"/>
<dbReference type="Proteomes" id="UP000001120">
    <property type="component" value="Chromosome"/>
</dbReference>
<dbReference type="GO" id="GO:0022625">
    <property type="term" value="C:cytosolic large ribosomal subunit"/>
    <property type="evidence" value="ECO:0007669"/>
    <property type="project" value="TreeGrafter"/>
</dbReference>
<dbReference type="GO" id="GO:0003735">
    <property type="term" value="F:structural constituent of ribosome"/>
    <property type="evidence" value="ECO:0007669"/>
    <property type="project" value="InterPro"/>
</dbReference>
<dbReference type="GO" id="GO:0006412">
    <property type="term" value="P:translation"/>
    <property type="evidence" value="ECO:0007669"/>
    <property type="project" value="UniProtKB-UniRule"/>
</dbReference>
<dbReference type="CDD" id="cd01658">
    <property type="entry name" value="Ribosomal_L30"/>
    <property type="match status" value="1"/>
</dbReference>
<dbReference type="FunFam" id="3.30.1390.20:FF:000001">
    <property type="entry name" value="50S ribosomal protein L30"/>
    <property type="match status" value="1"/>
</dbReference>
<dbReference type="Gene3D" id="3.30.1390.20">
    <property type="entry name" value="Ribosomal protein L30, ferredoxin-like fold domain"/>
    <property type="match status" value="1"/>
</dbReference>
<dbReference type="HAMAP" id="MF_01371_B">
    <property type="entry name" value="Ribosomal_uL30_B"/>
    <property type="match status" value="1"/>
</dbReference>
<dbReference type="InterPro" id="IPR036919">
    <property type="entry name" value="Ribo_uL30_ferredoxin-like_sf"/>
</dbReference>
<dbReference type="InterPro" id="IPR005996">
    <property type="entry name" value="Ribosomal_uL30_bac-type"/>
</dbReference>
<dbReference type="InterPro" id="IPR018038">
    <property type="entry name" value="Ribosomal_uL30_CS"/>
</dbReference>
<dbReference type="InterPro" id="IPR016082">
    <property type="entry name" value="Ribosomal_uL30_ferredoxin-like"/>
</dbReference>
<dbReference type="NCBIfam" id="TIGR01308">
    <property type="entry name" value="rpmD_bact"/>
    <property type="match status" value="1"/>
</dbReference>
<dbReference type="PANTHER" id="PTHR15892:SF2">
    <property type="entry name" value="LARGE RIBOSOMAL SUBUNIT PROTEIN UL30M"/>
    <property type="match status" value="1"/>
</dbReference>
<dbReference type="PANTHER" id="PTHR15892">
    <property type="entry name" value="MITOCHONDRIAL RIBOSOMAL PROTEIN L30"/>
    <property type="match status" value="1"/>
</dbReference>
<dbReference type="Pfam" id="PF00327">
    <property type="entry name" value="Ribosomal_L30"/>
    <property type="match status" value="1"/>
</dbReference>
<dbReference type="PIRSF" id="PIRSF002211">
    <property type="entry name" value="Ribosomal_L30_bac-type"/>
    <property type="match status" value="1"/>
</dbReference>
<dbReference type="SUPFAM" id="SSF55129">
    <property type="entry name" value="Ribosomal protein L30p/L7e"/>
    <property type="match status" value="1"/>
</dbReference>
<dbReference type="PROSITE" id="PS00634">
    <property type="entry name" value="RIBOSOMAL_L30"/>
    <property type="match status" value="1"/>
</dbReference>
<organism>
    <name type="scientific">Bacillus velezensis (strain DSM 23117 / BGSC 10A6 / LMG 26770 / FZB42)</name>
    <name type="common">Bacillus amyloliquefaciens subsp. plantarum</name>
    <dbReference type="NCBI Taxonomy" id="326423"/>
    <lineage>
        <taxon>Bacteria</taxon>
        <taxon>Bacillati</taxon>
        <taxon>Bacillota</taxon>
        <taxon>Bacilli</taxon>
        <taxon>Bacillales</taxon>
        <taxon>Bacillaceae</taxon>
        <taxon>Bacillus</taxon>
        <taxon>Bacillus amyloliquefaciens group</taxon>
    </lineage>
</organism>
<evidence type="ECO:0000255" key="1">
    <source>
        <dbReference type="HAMAP-Rule" id="MF_01371"/>
    </source>
</evidence>
<evidence type="ECO:0000305" key="2"/>
<keyword id="KW-0687">Ribonucleoprotein</keyword>
<keyword id="KW-0689">Ribosomal protein</keyword>
<reference key="1">
    <citation type="journal article" date="2007" name="Nat. Biotechnol.">
        <title>Comparative analysis of the complete genome sequence of the plant growth-promoting bacterium Bacillus amyloliquefaciens FZB42.</title>
        <authorList>
            <person name="Chen X.H."/>
            <person name="Koumoutsi A."/>
            <person name="Scholz R."/>
            <person name="Eisenreich A."/>
            <person name="Schneider K."/>
            <person name="Heinemeyer I."/>
            <person name="Morgenstern B."/>
            <person name="Voss B."/>
            <person name="Hess W.R."/>
            <person name="Reva O."/>
            <person name="Junge H."/>
            <person name="Voigt B."/>
            <person name="Jungblut P.R."/>
            <person name="Vater J."/>
            <person name="Suessmuth R."/>
            <person name="Liesegang H."/>
            <person name="Strittmatter A."/>
            <person name="Gottschalk G."/>
            <person name="Borriss R."/>
        </authorList>
    </citation>
    <scope>NUCLEOTIDE SEQUENCE [LARGE SCALE GENOMIC DNA]</scope>
    <source>
        <strain>DSM 23117 / BGSC 10A6 / LMG 26770 / FZB42</strain>
    </source>
</reference>
<gene>
    <name evidence="1" type="primary">rpmD</name>
    <name type="ordered locus">RBAM_001590</name>
</gene>
<feature type="chain" id="PRO_1000056004" description="Large ribosomal subunit protein uL30">
    <location>
        <begin position="1"/>
        <end position="59"/>
    </location>
</feature>
<protein>
    <recommendedName>
        <fullName evidence="1">Large ribosomal subunit protein uL30</fullName>
    </recommendedName>
    <alternativeName>
        <fullName evidence="2">50S ribosomal protein L30</fullName>
    </alternativeName>
</protein>
<proteinExistence type="inferred from homology"/>
<comment type="subunit">
    <text evidence="1">Part of the 50S ribosomal subunit.</text>
</comment>
<comment type="similarity">
    <text evidence="1">Belongs to the universal ribosomal protein uL30 family.</text>
</comment>